<feature type="chain" id="PRO_0000265263" description="Large ribosomal subunit protein uL6">
    <location>
        <begin position="1"/>
        <end position="179"/>
    </location>
</feature>
<accession>Q5X844</accession>
<evidence type="ECO:0000255" key="1">
    <source>
        <dbReference type="HAMAP-Rule" id="MF_01365"/>
    </source>
</evidence>
<evidence type="ECO:0000305" key="2"/>
<comment type="function">
    <text evidence="1">This protein binds to the 23S rRNA, and is important in its secondary structure. It is located near the subunit interface in the base of the L7/L12 stalk, and near the tRNA binding site of the peptidyltransferase center.</text>
</comment>
<comment type="subunit">
    <text evidence="1">Part of the 50S ribosomal subunit.</text>
</comment>
<comment type="similarity">
    <text evidence="1">Belongs to the universal ribosomal protein uL6 family.</text>
</comment>
<dbReference type="EMBL" id="CR628336">
    <property type="protein sequence ID" value="CAH11557.1"/>
    <property type="molecule type" value="Genomic_DNA"/>
</dbReference>
<dbReference type="RefSeq" id="WP_010946093.1">
    <property type="nucleotide sequence ID" value="NC_006368.1"/>
</dbReference>
<dbReference type="SMR" id="Q5X844"/>
<dbReference type="GeneID" id="57034347"/>
<dbReference type="KEGG" id="lpp:lpp0409"/>
<dbReference type="LegioList" id="lpp0409"/>
<dbReference type="HOGENOM" id="CLU_065464_1_2_6"/>
<dbReference type="GO" id="GO:0022625">
    <property type="term" value="C:cytosolic large ribosomal subunit"/>
    <property type="evidence" value="ECO:0007669"/>
    <property type="project" value="TreeGrafter"/>
</dbReference>
<dbReference type="GO" id="GO:0019843">
    <property type="term" value="F:rRNA binding"/>
    <property type="evidence" value="ECO:0007669"/>
    <property type="project" value="UniProtKB-UniRule"/>
</dbReference>
<dbReference type="GO" id="GO:0003735">
    <property type="term" value="F:structural constituent of ribosome"/>
    <property type="evidence" value="ECO:0007669"/>
    <property type="project" value="InterPro"/>
</dbReference>
<dbReference type="GO" id="GO:0002181">
    <property type="term" value="P:cytoplasmic translation"/>
    <property type="evidence" value="ECO:0007669"/>
    <property type="project" value="TreeGrafter"/>
</dbReference>
<dbReference type="FunFam" id="3.90.930.12:FF:000001">
    <property type="entry name" value="50S ribosomal protein L6"/>
    <property type="match status" value="1"/>
</dbReference>
<dbReference type="Gene3D" id="3.90.930.12">
    <property type="entry name" value="Ribosomal protein L6, alpha-beta domain"/>
    <property type="match status" value="2"/>
</dbReference>
<dbReference type="HAMAP" id="MF_01365_B">
    <property type="entry name" value="Ribosomal_uL6_B"/>
    <property type="match status" value="1"/>
</dbReference>
<dbReference type="InterPro" id="IPR000702">
    <property type="entry name" value="Ribosomal_uL6-like"/>
</dbReference>
<dbReference type="InterPro" id="IPR036789">
    <property type="entry name" value="Ribosomal_uL6-like_a/b-dom_sf"/>
</dbReference>
<dbReference type="InterPro" id="IPR020040">
    <property type="entry name" value="Ribosomal_uL6_a/b-dom"/>
</dbReference>
<dbReference type="InterPro" id="IPR019906">
    <property type="entry name" value="Ribosomal_uL6_bac-type"/>
</dbReference>
<dbReference type="InterPro" id="IPR002358">
    <property type="entry name" value="Ribosomal_uL6_CS"/>
</dbReference>
<dbReference type="NCBIfam" id="TIGR03654">
    <property type="entry name" value="L6_bact"/>
    <property type="match status" value="1"/>
</dbReference>
<dbReference type="PANTHER" id="PTHR11655">
    <property type="entry name" value="60S/50S RIBOSOMAL PROTEIN L6/L9"/>
    <property type="match status" value="1"/>
</dbReference>
<dbReference type="PANTHER" id="PTHR11655:SF14">
    <property type="entry name" value="LARGE RIBOSOMAL SUBUNIT PROTEIN UL6M"/>
    <property type="match status" value="1"/>
</dbReference>
<dbReference type="Pfam" id="PF00347">
    <property type="entry name" value="Ribosomal_L6"/>
    <property type="match status" value="2"/>
</dbReference>
<dbReference type="PIRSF" id="PIRSF002162">
    <property type="entry name" value="Ribosomal_L6"/>
    <property type="match status" value="1"/>
</dbReference>
<dbReference type="PRINTS" id="PR00059">
    <property type="entry name" value="RIBOSOMALL6"/>
</dbReference>
<dbReference type="SUPFAM" id="SSF56053">
    <property type="entry name" value="Ribosomal protein L6"/>
    <property type="match status" value="2"/>
</dbReference>
<dbReference type="PROSITE" id="PS00525">
    <property type="entry name" value="RIBOSOMAL_L6_1"/>
    <property type="match status" value="1"/>
</dbReference>
<protein>
    <recommendedName>
        <fullName evidence="1">Large ribosomal subunit protein uL6</fullName>
    </recommendedName>
    <alternativeName>
        <fullName evidence="2">50S ribosomal protein L6</fullName>
    </alternativeName>
</protein>
<reference key="1">
    <citation type="journal article" date="2004" name="Nat. Genet.">
        <title>Evidence in the Legionella pneumophila genome for exploitation of host cell functions and high genome plasticity.</title>
        <authorList>
            <person name="Cazalet C."/>
            <person name="Rusniok C."/>
            <person name="Brueggemann H."/>
            <person name="Zidane N."/>
            <person name="Magnier A."/>
            <person name="Ma L."/>
            <person name="Tichit M."/>
            <person name="Jarraud S."/>
            <person name="Bouchier C."/>
            <person name="Vandenesch F."/>
            <person name="Kunst F."/>
            <person name="Etienne J."/>
            <person name="Glaser P."/>
            <person name="Buchrieser C."/>
        </authorList>
    </citation>
    <scope>NUCLEOTIDE SEQUENCE [LARGE SCALE GENOMIC DNA]</scope>
    <source>
        <strain>Paris</strain>
    </source>
</reference>
<organism>
    <name type="scientific">Legionella pneumophila (strain Paris)</name>
    <dbReference type="NCBI Taxonomy" id="297246"/>
    <lineage>
        <taxon>Bacteria</taxon>
        <taxon>Pseudomonadati</taxon>
        <taxon>Pseudomonadota</taxon>
        <taxon>Gammaproteobacteria</taxon>
        <taxon>Legionellales</taxon>
        <taxon>Legionellaceae</taxon>
        <taxon>Legionella</taxon>
    </lineage>
</organism>
<sequence length="179" mass="19432">MSRVAKAPVIHSANVEVTFVDGVITVKGPKGILTQKINKLVNIQHSKESNKLEFSPASNDPMGWAQAGTARALVRNMVQGVTEGYTVTLELVGVGYRAQSKDKSISLSLGYSHSIEYDLPKGVTVETPNNTTILLKGVDKQVLGQIASEIRAFRPPEPYKGKGVKYAGEQIVRKEAKKK</sequence>
<keyword id="KW-0687">Ribonucleoprotein</keyword>
<keyword id="KW-0689">Ribosomal protein</keyword>
<keyword id="KW-0694">RNA-binding</keyword>
<keyword id="KW-0699">rRNA-binding</keyword>
<gene>
    <name evidence="1" type="primary">rplF</name>
    <name type="ordered locus">lpp0409</name>
</gene>
<proteinExistence type="inferred from homology"/>
<name>RL6_LEGPA</name>